<proteinExistence type="inferred from homology"/>
<sequence>MLNEFIAIRRELHQIPETGYKELKTQAYLLDYISKLPSEHLEVKKWRTGILVLVKGTNPEKTIGYRTDIDALPITEETGLPFASKHPGNMHACGHDLHMSIALGVLTHFASKPAKDNLLFVFQPAEEGPGGAKPIMESAEFAEWRPDSIYGLHIAPEYKVGEIAIKPGLLFANTSELFISFKGKGGHAAYPHLANDMVVAASAFVGQMQTIISRNIDPMDSAVITIGRIHGGEIQNVIAETAYLDGTIRTLSPETMEIVWTRLKQLAKGWEEAYQCEVEFHPGSDYYQVDNDPVETEAFIHFLEEQYPESYVPARSAMTGEDFGYFLSEIKGFMFWLGVDSEYSLHHAKLSPKEEAIPFAIDVLIHFLESK</sequence>
<protein>
    <recommendedName>
        <fullName evidence="1">N-acetyldiaminopimelate deacetylase</fullName>
        <ecNumber evidence="1">3.5.1.47</ecNumber>
    </recommendedName>
</protein>
<keyword id="KW-0028">Amino-acid biosynthesis</keyword>
<keyword id="KW-0220">Diaminopimelate biosynthesis</keyword>
<keyword id="KW-0378">Hydrolase</keyword>
<keyword id="KW-0457">Lysine biosynthesis</keyword>
<name>DAPEL_LISMF</name>
<evidence type="ECO:0000255" key="1">
    <source>
        <dbReference type="HAMAP-Rule" id="MF_01692"/>
    </source>
</evidence>
<feature type="chain" id="PRO_0000376775" description="N-acetyldiaminopimelate deacetylase">
    <location>
        <begin position="1"/>
        <end position="371"/>
    </location>
</feature>
<feature type="active site" evidence="1">
    <location>
        <position position="68"/>
    </location>
</feature>
<feature type="active site" description="Proton acceptor" evidence="1">
    <location>
        <position position="127"/>
    </location>
</feature>
<dbReference type="EC" id="3.5.1.47" evidence="1"/>
<dbReference type="EMBL" id="AE017262">
    <property type="protein sequence ID" value="AAT03810.1"/>
    <property type="molecule type" value="Genomic_DNA"/>
</dbReference>
<dbReference type="RefSeq" id="WP_003726428.1">
    <property type="nucleotide sequence ID" value="NC_002973.6"/>
</dbReference>
<dbReference type="SMR" id="Q721F4"/>
<dbReference type="MEROPS" id="M20.A27"/>
<dbReference type="KEGG" id="lmf:LMOf2365_1033"/>
<dbReference type="HOGENOM" id="CLU_023257_0_1_9"/>
<dbReference type="UniPathway" id="UPA00034">
    <property type="reaction ID" value="UER00024"/>
</dbReference>
<dbReference type="GO" id="GO:0050118">
    <property type="term" value="F:N-acetyldiaminopimelate deacetylase activity"/>
    <property type="evidence" value="ECO:0007669"/>
    <property type="project" value="UniProtKB-UniRule"/>
</dbReference>
<dbReference type="GO" id="GO:0019877">
    <property type="term" value="P:diaminopimelate biosynthetic process"/>
    <property type="evidence" value="ECO:0007669"/>
    <property type="project" value="UniProtKB-UniRule"/>
</dbReference>
<dbReference type="GO" id="GO:0009089">
    <property type="term" value="P:lysine biosynthetic process via diaminopimelate"/>
    <property type="evidence" value="ECO:0007669"/>
    <property type="project" value="UniProtKB-UniRule"/>
</dbReference>
<dbReference type="CDD" id="cd05670">
    <property type="entry name" value="M20_Acy1_YkuR-like"/>
    <property type="match status" value="1"/>
</dbReference>
<dbReference type="FunFam" id="3.30.70.360:FF:000001">
    <property type="entry name" value="N-acetyldiaminopimelate deacetylase"/>
    <property type="match status" value="1"/>
</dbReference>
<dbReference type="Gene3D" id="3.30.70.360">
    <property type="match status" value="1"/>
</dbReference>
<dbReference type="Gene3D" id="3.40.630.10">
    <property type="entry name" value="Zn peptidases"/>
    <property type="match status" value="1"/>
</dbReference>
<dbReference type="HAMAP" id="MF_01692">
    <property type="entry name" value="DapEL"/>
    <property type="match status" value="1"/>
</dbReference>
<dbReference type="InterPro" id="IPR023905">
    <property type="entry name" value="AcetylDAP_deacetylase"/>
</dbReference>
<dbReference type="InterPro" id="IPR017439">
    <property type="entry name" value="Amidohydrolase"/>
</dbReference>
<dbReference type="InterPro" id="IPR036264">
    <property type="entry name" value="Bact_exopeptidase_dim_dom"/>
</dbReference>
<dbReference type="InterPro" id="IPR002933">
    <property type="entry name" value="Peptidase_M20"/>
</dbReference>
<dbReference type="InterPro" id="IPR011650">
    <property type="entry name" value="Peptidase_M20_dimer"/>
</dbReference>
<dbReference type="NCBIfam" id="TIGR01891">
    <property type="entry name" value="amidohydrolases"/>
    <property type="match status" value="1"/>
</dbReference>
<dbReference type="PANTHER" id="PTHR11014:SF98">
    <property type="entry name" value="N-ACETYLDIAMINOPIMELATE DEACETYLASE"/>
    <property type="match status" value="1"/>
</dbReference>
<dbReference type="PANTHER" id="PTHR11014">
    <property type="entry name" value="PEPTIDASE M20 FAMILY MEMBER"/>
    <property type="match status" value="1"/>
</dbReference>
<dbReference type="Pfam" id="PF07687">
    <property type="entry name" value="M20_dimer"/>
    <property type="match status" value="1"/>
</dbReference>
<dbReference type="Pfam" id="PF01546">
    <property type="entry name" value="Peptidase_M20"/>
    <property type="match status" value="1"/>
</dbReference>
<dbReference type="PIRSF" id="PIRSF005962">
    <property type="entry name" value="Pept_M20D_amidohydro"/>
    <property type="match status" value="1"/>
</dbReference>
<dbReference type="SUPFAM" id="SSF55031">
    <property type="entry name" value="Bacterial exopeptidase dimerisation domain"/>
    <property type="match status" value="1"/>
</dbReference>
<dbReference type="SUPFAM" id="SSF53187">
    <property type="entry name" value="Zn-dependent exopeptidases"/>
    <property type="match status" value="1"/>
</dbReference>
<accession>Q721F4</accession>
<comment type="function">
    <text evidence="1">Catalyzes the conversion of N-acetyl-diaminopimelate to diaminopimelate and acetate.</text>
</comment>
<comment type="catalytic activity">
    <reaction evidence="1">
        <text>N-acetyl-(2S,6S)-2,6-diaminopimelate + H2O = (2S,6S)-2,6-diaminopimelate + acetate</text>
        <dbReference type="Rhea" id="RHEA:20405"/>
        <dbReference type="ChEBI" id="CHEBI:15377"/>
        <dbReference type="ChEBI" id="CHEBI:30089"/>
        <dbReference type="ChEBI" id="CHEBI:57609"/>
        <dbReference type="ChEBI" id="CHEBI:58767"/>
        <dbReference type="EC" id="3.5.1.47"/>
    </reaction>
</comment>
<comment type="pathway">
    <text evidence="1">Amino-acid biosynthesis; L-lysine biosynthesis via DAP pathway; LL-2,6-diaminopimelate from (S)-tetrahydrodipicolinate (acetylase route): step 3/3.</text>
</comment>
<comment type="similarity">
    <text evidence="1">Belongs to the peptidase M20A family. N-acetyldiaminopimelate deacetylase subfamily.</text>
</comment>
<organism>
    <name type="scientific">Listeria monocytogenes serotype 4b (strain F2365)</name>
    <dbReference type="NCBI Taxonomy" id="265669"/>
    <lineage>
        <taxon>Bacteria</taxon>
        <taxon>Bacillati</taxon>
        <taxon>Bacillota</taxon>
        <taxon>Bacilli</taxon>
        <taxon>Bacillales</taxon>
        <taxon>Listeriaceae</taxon>
        <taxon>Listeria</taxon>
    </lineage>
</organism>
<reference key="1">
    <citation type="journal article" date="2004" name="Nucleic Acids Res.">
        <title>Whole genome comparisons of serotype 4b and 1/2a strains of the food-borne pathogen Listeria monocytogenes reveal new insights into the core genome components of this species.</title>
        <authorList>
            <person name="Nelson K.E."/>
            <person name="Fouts D.E."/>
            <person name="Mongodin E.F."/>
            <person name="Ravel J."/>
            <person name="DeBoy R.T."/>
            <person name="Kolonay J.F."/>
            <person name="Rasko D.A."/>
            <person name="Angiuoli S.V."/>
            <person name="Gill S.R."/>
            <person name="Paulsen I.T."/>
            <person name="Peterson J.D."/>
            <person name="White O."/>
            <person name="Nelson W.C."/>
            <person name="Nierman W.C."/>
            <person name="Beanan M.J."/>
            <person name="Brinkac L.M."/>
            <person name="Daugherty S.C."/>
            <person name="Dodson R.J."/>
            <person name="Durkin A.S."/>
            <person name="Madupu R."/>
            <person name="Haft D.H."/>
            <person name="Selengut J."/>
            <person name="Van Aken S.E."/>
            <person name="Khouri H.M."/>
            <person name="Fedorova N."/>
            <person name="Forberger H.A."/>
            <person name="Tran B."/>
            <person name="Kathariou S."/>
            <person name="Wonderling L.D."/>
            <person name="Uhlich G.A."/>
            <person name="Bayles D.O."/>
            <person name="Luchansky J.B."/>
            <person name="Fraser C.M."/>
        </authorList>
    </citation>
    <scope>NUCLEOTIDE SEQUENCE [LARGE SCALE GENOMIC DNA]</scope>
    <source>
        <strain>F2365</strain>
    </source>
</reference>
<gene>
    <name type="ordered locus">LMOf2365_1033</name>
</gene>